<comment type="function">
    <text evidence="1">Force generating protein of respiratory cilia. Produces force towards the minus ends of microtubules. Dynein has ATPase activity; the force-producing power stroke is thought to occur on release of ADP (By similarity).</text>
</comment>
<comment type="subunit">
    <text evidence="1">The dynein complex consists of at least two heavy chains and a number of intermediate and light chains.</text>
</comment>
<comment type="subcellular location">
    <subcellularLocation>
        <location evidence="1">Cytoplasm</location>
        <location evidence="1">Cytoskeleton</location>
        <location evidence="1">Cilium axoneme</location>
    </subcellularLocation>
</comment>
<comment type="alternative products">
    <event type="alternative splicing"/>
    <isoform>
        <id>Q9C0G6-1</id>
        <name>1</name>
        <sequence type="displayed"/>
    </isoform>
    <isoform>
        <id>Q9C0G6-2</id>
        <name>2</name>
        <sequence type="described" ref="VSP_031122 VSP_031129 VSP_031130"/>
    </isoform>
    <isoform>
        <id>Q9C0G6-3</id>
        <name>3</name>
        <sequence type="described" ref="VSP_031123 VSP_031124 VSP_031125"/>
    </isoform>
    <isoform>
        <id>Q9C0G6-4</id>
        <name>4</name>
        <sequence type="described" ref="VSP_031126 VSP_031127 VSP_031128"/>
    </isoform>
</comment>
<comment type="tissue specificity">
    <text evidence="3 4">Expressed in several tissues, including brain, pituitary, testis and trachea, with highest levels in testis.</text>
</comment>
<comment type="domain">
    <text evidence="1">Dynein heavy chains probably consist of an N-terminal stem (which binds cargo and interacts with other dynein components), and the head or motor domain. The motor contains six tandemly-linked AAA domains in the head, which form a ring. A stalk-like structure (formed by two of the coiled coil domains) protrudes between AAA 4 and AAA 5 and terminates in a microtubule-binding site. A seventh domain may also contribute to this ring; it is not clear whether the N-terminus or the C-terminus forms this extra domain. There are four well-conserved and two non-conserved ATPase sites, one per AAA domain. Probably only one of these (within AAA 1) actually hydrolyzes ATP, the others may serve a regulatory function (By similarity).</text>
</comment>
<comment type="similarity">
    <text evidence="8">Belongs to the dynein heavy chain family.</text>
</comment>
<comment type="sequence caution" evidence="8">
    <conflict type="erroneous initiation">
        <sequence resource="EMBL-CDS" id="AAH15442"/>
    </conflict>
    <text>Truncated N-terminus.</text>
</comment>
<comment type="sequence caution" evidence="8">
    <conflict type="erroneous gene model prediction">
        <sequence resource="EMBL-CDS" id="AAX93115"/>
    </conflict>
</comment>
<comment type="sequence caution" evidence="8">
    <conflict type="frameshift">
        <sequence resource="EMBL-CDS" id="BAB15685"/>
    </conflict>
</comment>
<feature type="chain" id="PRO_0000317665" description="Dynein axonemal heavy chain 6">
    <location>
        <begin position="1"/>
        <end position="4158"/>
    </location>
</feature>
<feature type="region of interest" description="Stem" evidence="1">
    <location>
        <begin position="1"/>
        <end position="1433"/>
    </location>
</feature>
<feature type="region of interest" description="AAA 1" evidence="1">
    <location>
        <begin position="1434"/>
        <end position="1655"/>
    </location>
</feature>
<feature type="region of interest" description="AAA 2" evidence="1">
    <location>
        <begin position="1715"/>
        <end position="1948"/>
    </location>
</feature>
<feature type="region of interest" description="AAA 3" evidence="1">
    <location>
        <begin position="2058"/>
        <end position="2306"/>
    </location>
</feature>
<feature type="region of interest" description="AAA 4" evidence="1">
    <location>
        <begin position="2408"/>
        <end position="2659"/>
    </location>
</feature>
<feature type="region of interest" description="Stalk" evidence="1">
    <location>
        <begin position="2676"/>
        <end position="2961"/>
    </location>
</feature>
<feature type="region of interest" description="AAA 5" evidence="1">
    <location>
        <begin position="3042"/>
        <end position="3272"/>
    </location>
</feature>
<feature type="region of interest" description="AAA 6" evidence="1">
    <location>
        <begin position="3509"/>
        <end position="3730"/>
    </location>
</feature>
<feature type="coiled-coil region" evidence="2">
    <location>
        <begin position="805"/>
        <end position="859"/>
    </location>
</feature>
<feature type="coiled-coil region" evidence="2">
    <location>
        <begin position="2901"/>
        <end position="2996"/>
    </location>
</feature>
<feature type="binding site" evidence="2">
    <location>
        <begin position="192"/>
        <end position="199"/>
    </location>
    <ligand>
        <name>ATP</name>
        <dbReference type="ChEBI" id="CHEBI:30616"/>
    </ligand>
</feature>
<feature type="binding site" evidence="2">
    <location>
        <begin position="1472"/>
        <end position="1479"/>
    </location>
    <ligand>
        <name>ATP</name>
        <dbReference type="ChEBI" id="CHEBI:30616"/>
    </ligand>
</feature>
<feature type="binding site" evidence="2">
    <location>
        <begin position="1753"/>
        <end position="1760"/>
    </location>
    <ligand>
        <name>ATP</name>
        <dbReference type="ChEBI" id="CHEBI:30616"/>
    </ligand>
</feature>
<feature type="binding site" evidence="2">
    <location>
        <begin position="2096"/>
        <end position="2103"/>
    </location>
    <ligand>
        <name>ATP</name>
        <dbReference type="ChEBI" id="CHEBI:30616"/>
    </ligand>
</feature>
<feature type="binding site" evidence="2">
    <location>
        <begin position="2447"/>
        <end position="2454"/>
    </location>
    <ligand>
        <name>ATP</name>
        <dbReference type="ChEBI" id="CHEBI:30616"/>
    </ligand>
</feature>
<feature type="splice variant" id="VSP_031122" description="In isoform 2." evidence="7">
    <location>
        <begin position="1"/>
        <end position="3241"/>
    </location>
</feature>
<feature type="splice variant" id="VSP_031123" description="In isoform 3." evidence="5 6">
    <location>
        <begin position="1"/>
        <end position="421"/>
    </location>
</feature>
<feature type="splice variant" id="VSP_031124" description="In isoform 3." evidence="5 6">
    <original>DP</original>
    <variation>VS</variation>
    <location>
        <begin position="828"/>
        <end position="829"/>
    </location>
</feature>
<feature type="splice variant" id="VSP_031125" description="In isoform 3." evidence="5 6">
    <location>
        <begin position="830"/>
        <end position="4158"/>
    </location>
</feature>
<feature type="splice variant" id="VSP_031126" description="In isoform 4." evidence="6">
    <original>GILQCDPGTIREEIQIFRLFCHECQRVFHDRLINNEDKHYFHVILTEMAN</original>
    <variation>D</variation>
    <location>
        <begin position="2306"/>
        <end position="2355"/>
    </location>
</feature>
<feature type="splice variant" id="VSP_031127" description="In isoform 4." evidence="6">
    <original>FQYFISKVRQKLHIVLCMS</original>
    <variation>GCARVVMWLYHKNVSSPFI</variation>
    <location>
        <begin position="2561"/>
        <end position="2579"/>
    </location>
</feature>
<feature type="splice variant" id="VSP_031128" description="In isoform 4." evidence="6">
    <location>
        <begin position="2580"/>
        <end position="4158"/>
    </location>
</feature>
<feature type="splice variant" id="VSP_031129" description="In isoform 2." evidence="7">
    <original>YKETST</original>
    <variation>VCGLSS</variation>
    <location>
        <begin position="3828"/>
        <end position="3833"/>
    </location>
</feature>
<feature type="splice variant" id="VSP_031130" description="In isoform 2." evidence="7">
    <location>
        <begin position="3834"/>
        <end position="4158"/>
    </location>
</feature>
<feature type="sequence variant" id="VAR_080035" description="Found in a patient with azoospermia; uncertain significance; dbSNP:rs61731722." evidence="4">
    <original>H</original>
    <variation>Q</variation>
    <location>
        <position position="3471"/>
    </location>
</feature>
<feature type="sequence conflict" description="In Ref. 7; CAA10559." evidence="8" ref="7">
    <original>Y</original>
    <variation>C</variation>
    <location>
        <position position="1504"/>
    </location>
</feature>
<feature type="sequence conflict" description="In Ref. 6; AAC50700." evidence="8" ref="6">
    <original>C</original>
    <variation>G</variation>
    <location>
        <position position="1521"/>
    </location>
</feature>
<feature type="sequence conflict" description="In Ref. 1; BAB15685." evidence="8" ref="1">
    <original>F</original>
    <variation>S</variation>
    <location>
        <position position="3716"/>
    </location>
</feature>
<feature type="sequence conflict" description="In Ref. 1; BAB15685." evidence="8" ref="1">
    <original>K</original>
    <variation>R</variation>
    <location>
        <position position="3965"/>
    </location>
</feature>
<feature type="sequence conflict" description="In Ref. 1; BAB15685." evidence="8" ref="1">
    <original>A</original>
    <variation>V</variation>
    <location>
        <position position="4151"/>
    </location>
</feature>
<gene>
    <name evidence="9" type="primary">DNAH6</name>
    <name type="synonym">DNAHC6</name>
    <name type="synonym">DNHL1</name>
    <name type="synonym">HL2</name>
    <name type="synonym">KIAA1697</name>
</gene>
<reference key="1">
    <citation type="journal article" date="2004" name="Nat. Genet.">
        <title>Complete sequencing and characterization of 21,243 full-length human cDNAs.</title>
        <authorList>
            <person name="Ota T."/>
            <person name="Suzuki Y."/>
            <person name="Nishikawa T."/>
            <person name="Otsuki T."/>
            <person name="Sugiyama T."/>
            <person name="Irie R."/>
            <person name="Wakamatsu A."/>
            <person name="Hayashi K."/>
            <person name="Sato H."/>
            <person name="Nagai K."/>
            <person name="Kimura K."/>
            <person name="Makita H."/>
            <person name="Sekine M."/>
            <person name="Obayashi M."/>
            <person name="Nishi T."/>
            <person name="Shibahara T."/>
            <person name="Tanaka T."/>
            <person name="Ishii S."/>
            <person name="Yamamoto J."/>
            <person name="Saito K."/>
            <person name="Kawai Y."/>
            <person name="Isono Y."/>
            <person name="Nakamura Y."/>
            <person name="Nagahari K."/>
            <person name="Murakami K."/>
            <person name="Yasuda T."/>
            <person name="Iwayanagi T."/>
            <person name="Wagatsuma M."/>
            <person name="Shiratori A."/>
            <person name="Sudo H."/>
            <person name="Hosoiri T."/>
            <person name="Kaku Y."/>
            <person name="Kodaira H."/>
            <person name="Kondo H."/>
            <person name="Sugawara M."/>
            <person name="Takahashi M."/>
            <person name="Kanda K."/>
            <person name="Yokoi T."/>
            <person name="Furuya T."/>
            <person name="Kikkawa E."/>
            <person name="Omura Y."/>
            <person name="Abe K."/>
            <person name="Kamihara K."/>
            <person name="Katsuta N."/>
            <person name="Sato K."/>
            <person name="Tanikawa M."/>
            <person name="Yamazaki M."/>
            <person name="Ninomiya K."/>
            <person name="Ishibashi T."/>
            <person name="Yamashita H."/>
            <person name="Murakawa K."/>
            <person name="Fujimori K."/>
            <person name="Tanai H."/>
            <person name="Kimata M."/>
            <person name="Watanabe M."/>
            <person name="Hiraoka S."/>
            <person name="Chiba Y."/>
            <person name="Ishida S."/>
            <person name="Ono Y."/>
            <person name="Takiguchi S."/>
            <person name="Watanabe S."/>
            <person name="Yosida M."/>
            <person name="Hotuta T."/>
            <person name="Kusano J."/>
            <person name="Kanehori K."/>
            <person name="Takahashi-Fujii A."/>
            <person name="Hara H."/>
            <person name="Tanase T.-O."/>
            <person name="Nomura Y."/>
            <person name="Togiya S."/>
            <person name="Komai F."/>
            <person name="Hara R."/>
            <person name="Takeuchi K."/>
            <person name="Arita M."/>
            <person name="Imose N."/>
            <person name="Musashino K."/>
            <person name="Yuuki H."/>
            <person name="Oshima A."/>
            <person name="Sasaki N."/>
            <person name="Aotsuka S."/>
            <person name="Yoshikawa Y."/>
            <person name="Matsunawa H."/>
            <person name="Ichihara T."/>
            <person name="Shiohata N."/>
            <person name="Sano S."/>
            <person name="Moriya S."/>
            <person name="Momiyama H."/>
            <person name="Satoh N."/>
            <person name="Takami S."/>
            <person name="Terashima Y."/>
            <person name="Suzuki O."/>
            <person name="Nakagawa S."/>
            <person name="Senoh A."/>
            <person name="Mizoguchi H."/>
            <person name="Goto Y."/>
            <person name="Shimizu F."/>
            <person name="Wakebe H."/>
            <person name="Hishigaki H."/>
            <person name="Watanabe T."/>
            <person name="Sugiyama A."/>
            <person name="Takemoto M."/>
            <person name="Kawakami B."/>
            <person name="Yamazaki M."/>
            <person name="Watanabe K."/>
            <person name="Kumagai A."/>
            <person name="Itakura S."/>
            <person name="Fukuzumi Y."/>
            <person name="Fujimori Y."/>
            <person name="Komiyama M."/>
            <person name="Tashiro H."/>
            <person name="Tanigami A."/>
            <person name="Fujiwara T."/>
            <person name="Ono T."/>
            <person name="Yamada K."/>
            <person name="Fujii Y."/>
            <person name="Ozaki K."/>
            <person name="Hirao M."/>
            <person name="Ohmori Y."/>
            <person name="Kawabata A."/>
            <person name="Hikiji T."/>
            <person name="Kobatake N."/>
            <person name="Inagaki H."/>
            <person name="Ikema Y."/>
            <person name="Okamoto S."/>
            <person name="Okitani R."/>
            <person name="Kawakami T."/>
            <person name="Noguchi S."/>
            <person name="Itoh T."/>
            <person name="Shigeta K."/>
            <person name="Senba T."/>
            <person name="Matsumura K."/>
            <person name="Nakajima Y."/>
            <person name="Mizuno T."/>
            <person name="Morinaga M."/>
            <person name="Sasaki M."/>
            <person name="Togashi T."/>
            <person name="Oyama M."/>
            <person name="Hata H."/>
            <person name="Watanabe M."/>
            <person name="Komatsu T."/>
            <person name="Mizushima-Sugano J."/>
            <person name="Satoh T."/>
            <person name="Shirai Y."/>
            <person name="Takahashi Y."/>
            <person name="Nakagawa K."/>
            <person name="Okumura K."/>
            <person name="Nagase T."/>
            <person name="Nomura N."/>
            <person name="Kikuchi H."/>
            <person name="Masuho Y."/>
            <person name="Yamashita R."/>
            <person name="Nakai K."/>
            <person name="Yada T."/>
            <person name="Nakamura Y."/>
            <person name="Ohara O."/>
            <person name="Isogai T."/>
            <person name="Sugano S."/>
        </authorList>
    </citation>
    <scope>NUCLEOTIDE SEQUENCE [LARGE SCALE MRNA] (ISOFORM 3)</scope>
    <scope>NUCLEOTIDE SEQUENCE [LARGE SCALE MRNA] OF 3573-4158 (ISOFORM 1)</scope>
    <source>
        <tissue>Amygdala</tissue>
        <tissue>Lung</tissue>
    </source>
</reference>
<reference key="2">
    <citation type="journal article" date="2007" name="BMC Genomics">
        <title>The full-ORF clone resource of the German cDNA consortium.</title>
        <authorList>
            <person name="Bechtel S."/>
            <person name="Rosenfelder H."/>
            <person name="Duda A."/>
            <person name="Schmidt C.P."/>
            <person name="Ernst U."/>
            <person name="Wellenreuther R."/>
            <person name="Mehrle A."/>
            <person name="Schuster C."/>
            <person name="Bahr A."/>
            <person name="Bloecker H."/>
            <person name="Heubner D."/>
            <person name="Hoerlein A."/>
            <person name="Michel G."/>
            <person name="Wedler H."/>
            <person name="Koehrer K."/>
            <person name="Ottenwaelder B."/>
            <person name="Poustka A."/>
            <person name="Wiemann S."/>
            <person name="Schupp I."/>
        </authorList>
    </citation>
    <scope>NUCLEOTIDE SEQUENCE [LARGE SCALE MRNA] (ISOFORM 2)</scope>
    <source>
        <tissue>Lymph node</tissue>
    </source>
</reference>
<reference key="3">
    <citation type="journal article" date="2005" name="Nature">
        <title>Generation and annotation of the DNA sequences of human chromosomes 2 and 4.</title>
        <authorList>
            <person name="Hillier L.W."/>
            <person name="Graves T.A."/>
            <person name="Fulton R.S."/>
            <person name="Fulton L.A."/>
            <person name="Pepin K.H."/>
            <person name="Minx P."/>
            <person name="Wagner-McPherson C."/>
            <person name="Layman D."/>
            <person name="Wylie K."/>
            <person name="Sekhon M."/>
            <person name="Becker M.C."/>
            <person name="Fewell G.A."/>
            <person name="Delehaunty K.D."/>
            <person name="Miner T.L."/>
            <person name="Nash W.E."/>
            <person name="Kremitzki C."/>
            <person name="Oddy L."/>
            <person name="Du H."/>
            <person name="Sun H."/>
            <person name="Bradshaw-Cordum H."/>
            <person name="Ali J."/>
            <person name="Carter J."/>
            <person name="Cordes M."/>
            <person name="Harris A."/>
            <person name="Isak A."/>
            <person name="van Brunt A."/>
            <person name="Nguyen C."/>
            <person name="Du F."/>
            <person name="Courtney L."/>
            <person name="Kalicki J."/>
            <person name="Ozersky P."/>
            <person name="Abbott S."/>
            <person name="Armstrong J."/>
            <person name="Belter E.A."/>
            <person name="Caruso L."/>
            <person name="Cedroni M."/>
            <person name="Cotton M."/>
            <person name="Davidson T."/>
            <person name="Desai A."/>
            <person name="Elliott G."/>
            <person name="Erb T."/>
            <person name="Fronick C."/>
            <person name="Gaige T."/>
            <person name="Haakenson W."/>
            <person name="Haglund K."/>
            <person name="Holmes A."/>
            <person name="Harkins R."/>
            <person name="Kim K."/>
            <person name="Kruchowski S.S."/>
            <person name="Strong C.M."/>
            <person name="Grewal N."/>
            <person name="Goyea E."/>
            <person name="Hou S."/>
            <person name="Levy A."/>
            <person name="Martinka S."/>
            <person name="Mead K."/>
            <person name="McLellan M.D."/>
            <person name="Meyer R."/>
            <person name="Randall-Maher J."/>
            <person name="Tomlinson C."/>
            <person name="Dauphin-Kohlberg S."/>
            <person name="Kozlowicz-Reilly A."/>
            <person name="Shah N."/>
            <person name="Swearengen-Shahid S."/>
            <person name="Snider J."/>
            <person name="Strong J.T."/>
            <person name="Thompson J."/>
            <person name="Yoakum M."/>
            <person name="Leonard S."/>
            <person name="Pearman C."/>
            <person name="Trani L."/>
            <person name="Radionenko M."/>
            <person name="Waligorski J.E."/>
            <person name="Wang C."/>
            <person name="Rock S.M."/>
            <person name="Tin-Wollam A.-M."/>
            <person name="Maupin R."/>
            <person name="Latreille P."/>
            <person name="Wendl M.C."/>
            <person name="Yang S.-P."/>
            <person name="Pohl C."/>
            <person name="Wallis J.W."/>
            <person name="Spieth J."/>
            <person name="Bieri T.A."/>
            <person name="Berkowicz N."/>
            <person name="Nelson J.O."/>
            <person name="Osborne J."/>
            <person name="Ding L."/>
            <person name="Meyer R."/>
            <person name="Sabo A."/>
            <person name="Shotland Y."/>
            <person name="Sinha P."/>
            <person name="Wohldmann P.E."/>
            <person name="Cook L.L."/>
            <person name="Hickenbotham M.T."/>
            <person name="Eldred J."/>
            <person name="Williams D."/>
            <person name="Jones T.A."/>
            <person name="She X."/>
            <person name="Ciccarelli F.D."/>
            <person name="Izaurralde E."/>
            <person name="Taylor J."/>
            <person name="Schmutz J."/>
            <person name="Myers R.M."/>
            <person name="Cox D.R."/>
            <person name="Huang X."/>
            <person name="McPherson J.D."/>
            <person name="Mardis E.R."/>
            <person name="Clifton S.W."/>
            <person name="Warren W.C."/>
            <person name="Chinwalla A.T."/>
            <person name="Eddy S.R."/>
            <person name="Marra M.A."/>
            <person name="Ovcharenko I."/>
            <person name="Furey T.S."/>
            <person name="Miller W."/>
            <person name="Eichler E.E."/>
            <person name="Bork P."/>
            <person name="Suyama M."/>
            <person name="Torrents D."/>
            <person name="Waterston R.H."/>
            <person name="Wilson R.K."/>
        </authorList>
    </citation>
    <scope>NUCLEOTIDE SEQUENCE [LARGE SCALE GENOMIC DNA]</scope>
</reference>
<reference key="4">
    <citation type="submission" date="2005-09" db="EMBL/GenBank/DDBJ databases">
        <authorList>
            <person name="Mural R.J."/>
            <person name="Istrail S."/>
            <person name="Sutton G.G."/>
            <person name="Florea L."/>
            <person name="Halpern A.L."/>
            <person name="Mobarry C.M."/>
            <person name="Lippert R."/>
            <person name="Walenz B."/>
            <person name="Shatkay H."/>
            <person name="Dew I."/>
            <person name="Miller J.R."/>
            <person name="Flanigan M.J."/>
            <person name="Edwards N.J."/>
            <person name="Bolanos R."/>
            <person name="Fasulo D."/>
            <person name="Halldorsson B.V."/>
            <person name="Hannenhalli S."/>
            <person name="Turner R."/>
            <person name="Yooseph S."/>
            <person name="Lu F."/>
            <person name="Nusskern D.R."/>
            <person name="Shue B.C."/>
            <person name="Zheng X.H."/>
            <person name="Zhong F."/>
            <person name="Delcher A.L."/>
            <person name="Huson D.H."/>
            <person name="Kravitz S.A."/>
            <person name="Mouchard L."/>
            <person name="Reinert K."/>
            <person name="Remington K.A."/>
            <person name="Clark A.G."/>
            <person name="Waterman M.S."/>
            <person name="Eichler E.E."/>
            <person name="Adams M.D."/>
            <person name="Hunkapiller M.W."/>
            <person name="Myers E.W."/>
            <person name="Venter J.C."/>
        </authorList>
    </citation>
    <scope>NUCLEOTIDE SEQUENCE [LARGE SCALE GENOMIC DNA]</scope>
</reference>
<reference key="5">
    <citation type="journal article" date="2004" name="Genome Res.">
        <title>The status, quality, and expansion of the NIH full-length cDNA project: the Mammalian Gene Collection (MGC).</title>
        <authorList>
            <consortium name="The MGC Project Team"/>
        </authorList>
    </citation>
    <scope>NUCLEOTIDE SEQUENCE [LARGE SCALE MRNA] (ISOFORM 3)</scope>
    <scope>NUCLEOTIDE SEQUENCE [LARGE SCALE MRNA] OF 1925-4158 (ISOFORM 4)</scope>
    <scope>NUCLEOTIDE SEQUENCE [LARGE SCALE MRNA] OF 2578-4158 (ISOFORM 1)</scope>
    <source>
        <tissue>Brain</tissue>
        <tissue>Kidney</tissue>
    </source>
</reference>
<reference key="6">
    <citation type="journal article" date="1996" name="Genomics">
        <title>Multiple mouse chromosomal loci for dynein-based motility.</title>
        <authorList>
            <person name="Vaughan K.T."/>
            <person name="Mikami A."/>
            <person name="Paschal B.M."/>
            <person name="Holzbaur E.L.F."/>
            <person name="Hughes S.M."/>
            <person name="Echeverri C.J."/>
            <person name="Moore K.J."/>
            <person name="Gilbert D.J."/>
            <person name="Copeland N.G."/>
            <person name="Jenkins N.A."/>
            <person name="Vallee R.B."/>
        </authorList>
    </citation>
    <scope>NUCLEOTIDE SEQUENCE [MRNA] OF 1448-1527 (ISOFORM 1)</scope>
    <source>
        <tissue>Lung</tissue>
    </source>
</reference>
<reference key="7">
    <citation type="journal article" date="2000" name="Eur. J. Hum. Genet.">
        <title>Identification, tissue specific expression, and chromosomal localisation of several human dynein heavy chain genes.</title>
        <authorList>
            <person name="Maiti A.K."/>
            <person name="Mattei M.-G."/>
            <person name="Jorissen M."/>
            <person name="Volz A."/>
            <person name="Zeigler A."/>
            <person name="Bouvagnet P."/>
        </authorList>
    </citation>
    <scope>NUCLEOTIDE SEQUENCE [MRNA] OF 1476-1576 (ISOFORM 1)</scope>
    <scope>TISSUE SPECIFICITY</scope>
    <source>
        <tissue>Nasal polyp</tissue>
    </source>
</reference>
<reference key="8">
    <citation type="journal article" date="2000" name="DNA Res.">
        <title>Prediction of the coding sequences of unidentified human genes. XIX. The complete sequences of 100 new cDNA clones from brain which code for large proteins in vitro.</title>
        <authorList>
            <person name="Nagase T."/>
            <person name="Kikuno R."/>
            <person name="Hattori A."/>
            <person name="Kondo Y."/>
            <person name="Okumura K."/>
            <person name="Ohara O."/>
        </authorList>
    </citation>
    <scope>NUCLEOTIDE SEQUENCE [LARGE SCALE MRNA] OF 1977-4158 (ISOFORM 1)</scope>
    <source>
        <tissue>Brain</tissue>
    </source>
</reference>
<reference key="9">
    <citation type="submission" date="2005-08" db="EMBL/GenBank/DDBJ databases">
        <authorList>
            <person name="Ohara O."/>
            <person name="Nagase T."/>
            <person name="Kikuno R."/>
        </authorList>
    </citation>
    <scope>SEQUENCE REVISION</scope>
</reference>
<reference key="10">
    <citation type="journal article" date="2017" name="Genet. Med.">
        <title>A familial study of azoospermic men identifies three novel causative mutations in three new human azoospermia genes.</title>
        <authorList>
            <person name="Gershoni M."/>
            <person name="Hauser R."/>
            <person name="Yogev L."/>
            <person name="Lehavi O."/>
            <person name="Azem F."/>
            <person name="Yavetz H."/>
            <person name="Pietrokovski S."/>
            <person name="Kleiman S.E."/>
        </authorList>
    </citation>
    <scope>TISSUE SPECIFICITY</scope>
    <scope>VARIANT GLN-3471</scope>
</reference>
<keyword id="KW-0002">3D-structure</keyword>
<keyword id="KW-0025">Alternative splicing</keyword>
<keyword id="KW-0067">ATP-binding</keyword>
<keyword id="KW-0966">Cell projection</keyword>
<keyword id="KW-0969">Cilium</keyword>
<keyword id="KW-0175">Coiled coil</keyword>
<keyword id="KW-0963">Cytoplasm</keyword>
<keyword id="KW-0206">Cytoskeleton</keyword>
<keyword id="KW-0243">Dynein</keyword>
<keyword id="KW-0493">Microtubule</keyword>
<keyword id="KW-0505">Motor protein</keyword>
<keyword id="KW-0547">Nucleotide-binding</keyword>
<keyword id="KW-1267">Proteomics identification</keyword>
<keyword id="KW-1185">Reference proteome</keyword>
<keyword id="KW-0677">Repeat</keyword>
<proteinExistence type="evidence at protein level"/>
<evidence type="ECO:0000250" key="1"/>
<evidence type="ECO:0000255" key="2"/>
<evidence type="ECO:0000269" key="3">
    <source>
    </source>
</evidence>
<evidence type="ECO:0000269" key="4">
    <source>
    </source>
</evidence>
<evidence type="ECO:0000303" key="5">
    <source>
    </source>
</evidence>
<evidence type="ECO:0000303" key="6">
    <source>
    </source>
</evidence>
<evidence type="ECO:0000303" key="7">
    <source>
    </source>
</evidence>
<evidence type="ECO:0000305" key="8"/>
<evidence type="ECO:0000312" key="9">
    <source>
        <dbReference type="HGNC" id="HGNC:2951"/>
    </source>
</evidence>
<organism>
    <name type="scientific">Homo sapiens</name>
    <name type="common">Human</name>
    <dbReference type="NCBI Taxonomy" id="9606"/>
    <lineage>
        <taxon>Eukaryota</taxon>
        <taxon>Metazoa</taxon>
        <taxon>Chordata</taxon>
        <taxon>Craniata</taxon>
        <taxon>Vertebrata</taxon>
        <taxon>Euteleostomi</taxon>
        <taxon>Mammalia</taxon>
        <taxon>Eutheria</taxon>
        <taxon>Euarchontoglires</taxon>
        <taxon>Primates</taxon>
        <taxon>Haplorrhini</taxon>
        <taxon>Catarrhini</taxon>
        <taxon>Hominidae</taxon>
        <taxon>Homo</taxon>
    </lineage>
</organism>
<sequence>MTFRATDSEFDLTNIEEYAENSALSRLNNIKAKQRVSYVTSTENESDTQILTFRHITKAQEKTRKRQQPIKLEPLPVLKVYQDHKQPEYIHEQNRFQLMTAGIIKRPVSIAKKSFATSSTQFLEHQDAVKKMQIHRPYVEVFSPSPPKLPHTGIGKRGLFGTRSSAYPKYTFHDREEVVKANIRDPLQIIKIIRENEHLGFLYMIPAVPRSSIEYDTYNLKVVSYENINKNDYYTISQRAVTHIYNEDIEFIEIDRWEQEYLYHRELTKIPIFSLFRKWKAFSVWRKNVRSKKITGCQKSLQKNLFIVNPHLRPALLKINELCYHLSFMGLCYIEKCHTYTLQEFKAAQVIRLAEVTERLGEFRNEAKYVVRRACRFALRAAGFVPDDCAFGPFEDYHKVQSSGSFINTPHELPTYGDSEKMTYTEQASKRHYCMRLTCFIRLNDYLIENTMHILTVNAVNSLLNHLTDKLKRTPSADVIQKWITEEKPEVPDKKGTLMVEKQEEDESLIPMFLTELMLTVQSLLFEPSLEDFLDGILGAVNHCQNTVLSVPNLVPDSYFDAFTSPYINNKLEGKTCGTGPSLAAVFEDDKNFHTIISQIKETIQAAFESARIYAATFEKFQIFFKENESLDLQALKLQEPDINFFSEQLEKYHKQHKDAVALRPTRNVGLLLIDTRLLREKLIPSPLRCLEVLNFMLPRQSKKKVDAIIFEAQDAEYKLEFVPTTTTEYVHSLLFLDEIQERIESLEDEGNIVTQMYKLMEQYQVPTPPEDFAVFATMKPSIVAVRNAIDKSVGDRESSIKQFCVHLGSDLEELNNEVNEVKLQAQDPQILDISADQDKIRLILNNLQSVLADLQKRAFQYKSYQKNFKVEVSKFEALEEVSAELKLKQLLWDSFSEWDKLQQEWLKSKFDCLDPEVLNGQVSKYAKFVTQLEKGLPPNSVVPQLKYKVEKMKEKLPVIIDLRNPTLKARHWAAIEQTVDATLVDAEIPLTLERLSQLHVFDFGQEIQDISGQASGEAALEAILKKVEDSWKTTEFVILPHRDSKDVFILGGTDDIQVLLDDSTINVATLASSRYLGPLKTRVDEWQKQLALFNQTLEEWLTCQRNWLYLESIFNAPDIQRQLPAEAKMFLQVDKSWKEIMRKVNRLPNALRAATQPGLLETFQNNNALLDQIQKCLEAYLESKRVIFPRFYFLSNDELLEILAQTRNPQAVQPHLRKCFDSISKLEFALMPPAEGKIPGIDGEPEKVYTNDILAMLSPEGERVSLGKGLKARGNVEEWLGKVEEAMFTSLRRLCKAAIADYQGKLRTDWVVAGHPSQVILTVSQIMWCRDLTECLETEHSNHIQALKNFEKVNFERLNALAAIVQGSLPKLHRNILTALITIDVHARDIVTELVQSKVETVESFDWQRQLRYYWDIDLDNCVARMALSQYTYGYEYLGACPRLVITPLTDRCYLCLMGALQLDLGGAPAGPAGTGKTETTKDLAKALAIQCVVFNCSDGLDYKMMGRFFSGLAQSGAWCCFDEFNRIDIEVLSVIAQQLITIRNAKAAKLSRFMFEGREIKLVMTCAAFITMNPGYAGRTELPDNLKALFRPFAMMVPNYALIAEVILYSEGFESSKILARKMTQMYKLCSEQLSQQDHYDFGMRAVKSVLVMAGSLKRENPDLNEDVVLIRALQDSNLPKFLTDDALLFSGIISDLFPGVQIPEHDYGILQSTIVDVMNRQNLQPEMCMVRKVIQFYETMLVRHGVMLVGPTGGGKTTVYRILAETLGNLQKLGIENSFYQAVKTYVLNPKSITMGELYGEVNNLTLEWKDGLMALSVRAAVNDTSEDHKWIISDGPVDALWIENMNTVLDDNKMLCLANSERIKLTPQIHMLFEVQDLRVASPATVSRCGMVFVDPEELKWMPYVKTWMKGISKKLTEETQEYILNLFQRYVDEGLHFINKKCSQAIPQVDISKVTTLCCLLESLILGKDGVNLAMEQTKLNTILCQTFVFCYLWSLGGNLTENYYDSFDTFIRTQFDDNPDARLPNSGDLWSIHMDFDTKRLDPWERIIPTFKYNRDVPFFEMLVPTTDTVRYGYLMEKLLAVKHSVLFTGITGVGKSVIAKGLLNKIQESAGYVPVYLNFSAQTSSARTQEIIESKLERKRKNILGAPGNKRIVIFVDDLNMPRLDRYGSQPPIELLRQYQDFGGFYDRNKLFWKEIQDVTIISACAPPGGGRNPVTPRFIRHFSMLCLPMPSEHSLKQIFQAILNGFLSDFPPAVKQTASSIVEASVEIYNKMSVDLLPTPAKSHYVFNLRDLSKCVQGILQCDPGTIREEIQIFRLFCHECQRVFHDRLINNEDKHYFHVILTEMANKHFGIAIDLEYFLNKPIIFGDFIKFGADKADRIYDDMPDIEKTANVLQDYLDDYNLTNPKEVKLVFFQDAIEHVSRIARMIRQERGNALLVGVGGTGKQSLTRLAAHICGYKCLQIELSRGYNYDSFHEDLRKLYKMAGVEDKNMVFLFTDTQIVVEEFLEDINNILNSGEVPNLFEKDELEQVLAATRPRAKEVGISEGNRDEVFQYFISKVRQKLHIVLCMSPVGEAFRSRCRMFPSLVNCCTIDWFVQWPREALLSVSKTFFSQVDAGNEELKEKLPLMCVNVHLSVSSMAERYYNELRRRYYTTPTSYLELINLYLSMLSEKRKQIISARDRVKNGLTKLLETNILVDKMKLDLSALEPVLLAKSEDVEALMEKLAVDQESADQVRNTVQEDEATAKVKAEETQAIADDAQRDLDEALPALDAANKALDSLDKADISEIRVFTKPPDLVMTVMEAISILLNAKPDWPSAKQLLGDSNFLKRLLEYDKENIKPQILAKLQKYINNPDFVPEKVEKVSKACKSMCMWVRAMDLYSRVVKVVEPKRQKLRAAQAELDITMATLREKQALLRQVEDQIQALQDEYDKGVNEKESLAKTMALTKARLVRAGKLTAALEDEQVRWEESIQKFEEEISNITGNVFIAAACVAYYGAFTAQYRQSLIECWIQDCQSLEIPIDPSFSLINILGDPYEIRQWNTDGLPRDLISTENGILVTQGRRWPLMIDPQDQANRWIRNKESKSGLKIIKLTDSNFLRILENSIRLGLPVLLEELKETLDPALEPILLKQIFISGGRLLIRLGDSDIDYDKNFRFYMTTKMPNPHYLPEVCIKVTIINFTVTKSGLEDQLLSDVVRLEKPRLEEQRIKLIVRINTDKNQLKTIEEKILRMLFTSEGNILDNEELIDTLQDSKITSGAIKTRLEEAESTEQMINVAREKYRPVATQGSVMYFVIASLSEIDPMYQYSLKYFKQLFNTTIETSVKTENLQQRLDVLLEQTLLTAYVNVSRGLFEQHKLIYSFMLCVEMMRQQGTLSDAEWNFFLRGSAGLEKERPPKPEAPWLPTATWFACCDLEESFPVFHGLTQNILSHPISIRLGSFETYINPQKWEGYSKMKHEDKHMRQEKEAAHQDPWSAGLSSFHKLILIKCCKEEKVVFALTDFVIENLGKQFIETPPVDLPTLYQDMSCNTPLVFILSTGSDPMGAFQRFARESGYSERVQSISLGQGQGPIAEKMVKDAMKSGNWVFLQNCHLAVSWMLAMEELIKTFTDPDSAIKDTFRLFLSSMPSNTFPVTVLQNSVKVTNEPPKGLRANIRRAFTEMTPSFFEENILGKKWRQIIFGICFFHAIIQERKKFGPLGWNICYEFNDSDRECALLNLKLYCKEGKIPWDALIYITGEITYGGRVTDSWDQRCLRTILKRFFSPETLEEDYKYSESGIYFAPMADSLQEFKDYIENLPLIDDPEIFGMHENANLVFQYKETSTLINTILEVQPRSSTGGEGKSNDEIVQELVASVQTRVPEKLEMEGASESLFVKDLQGRLNSLTTVLGQEVDRFNNLLKLIHTSLETLNKAIAGFVVMSEEMEKVYNSFLNNQVPALWSNTAYPSLKPLGSWVKDLILRTSFVDLWLKRGQPKSYWISGFFFPQGFLTGTLQNHARKYNLPIDELSFKYSVIPTYRDQAAVIEAAKTVQFGQELPMDMELPSPEDGVLVHGMFMDASRWDDKEMVIEDALPGQMNPVLPVVHFEPQQNYKPSPTLYHCPLYKTGARAGTLSTTGHSTNFVVTVLLPSKRSKDYWIAKGSALLCQLSE</sequence>
<name>DYH6_HUMAN</name>
<protein>
    <recommendedName>
        <fullName evidence="8">Dynein axonemal heavy chain 6</fullName>
    </recommendedName>
    <alternativeName>
        <fullName>Axonemal beta dynein heavy chain 6</fullName>
    </alternativeName>
    <alternativeName>
        <fullName>Ciliary dynein heavy chain 6</fullName>
    </alternativeName>
</protein>
<dbReference type="EMBL" id="AK027182">
    <property type="protein sequence ID" value="BAB15685.1"/>
    <property type="status" value="ALT_FRAME"/>
    <property type="molecule type" value="mRNA"/>
</dbReference>
<dbReference type="EMBL" id="AK094676">
    <property type="protein sequence ID" value="BAC04400.1"/>
    <property type="molecule type" value="mRNA"/>
</dbReference>
<dbReference type="EMBL" id="AL512706">
    <property type="protein sequence ID" value="CAC21651.1"/>
    <property type="molecule type" value="mRNA"/>
</dbReference>
<dbReference type="EMBL" id="AC010087">
    <property type="protein sequence ID" value="AAX93108.1"/>
    <property type="molecule type" value="Genomic_DNA"/>
</dbReference>
<dbReference type="EMBL" id="AC096770">
    <property type="protein sequence ID" value="AAY24108.1"/>
    <property type="molecule type" value="Genomic_DNA"/>
</dbReference>
<dbReference type="EMBL" id="AC098975">
    <property type="protein sequence ID" value="AAX93115.1"/>
    <property type="status" value="ALT_SEQ"/>
    <property type="molecule type" value="Genomic_DNA"/>
</dbReference>
<dbReference type="EMBL" id="AC109827">
    <property type="status" value="NOT_ANNOTATED_CDS"/>
    <property type="molecule type" value="Genomic_DNA"/>
</dbReference>
<dbReference type="EMBL" id="CH471053">
    <property type="protein sequence ID" value="EAW99557.1"/>
    <property type="molecule type" value="Genomic_DNA"/>
</dbReference>
<dbReference type="EMBL" id="BC015442">
    <property type="protein sequence ID" value="AAH15442.1"/>
    <property type="status" value="ALT_INIT"/>
    <property type="molecule type" value="mRNA"/>
</dbReference>
<dbReference type="EMBL" id="BC104884">
    <property type="protein sequence ID" value="AAI04885.1"/>
    <property type="molecule type" value="mRNA"/>
</dbReference>
<dbReference type="EMBL" id="BC113424">
    <property type="protein sequence ID" value="AAI13425.1"/>
    <property type="molecule type" value="mRNA"/>
</dbReference>
<dbReference type="EMBL" id="BC117259">
    <property type="protein sequence ID" value="AAI17260.1"/>
    <property type="molecule type" value="mRNA"/>
</dbReference>
<dbReference type="EMBL" id="BC143666">
    <property type="protein sequence ID" value="AAI43667.1"/>
    <property type="molecule type" value="mRNA"/>
</dbReference>
<dbReference type="EMBL" id="U61736">
    <property type="protein sequence ID" value="AAC50700.1"/>
    <property type="molecule type" value="mRNA"/>
</dbReference>
<dbReference type="EMBL" id="AJ132086">
    <property type="protein sequence ID" value="CAA10559.1"/>
    <property type="molecule type" value="mRNA"/>
</dbReference>
<dbReference type="EMBL" id="AB051484">
    <property type="protein sequence ID" value="BAB21788.2"/>
    <property type="molecule type" value="mRNA"/>
</dbReference>
<dbReference type="CCDS" id="CCDS46348.1">
    <molecule id="Q9C0G6-1"/>
</dbReference>
<dbReference type="RefSeq" id="NP_001361.1">
    <molecule id="Q9C0G6-1"/>
    <property type="nucleotide sequence ID" value="NM_001370.2"/>
</dbReference>
<dbReference type="RefSeq" id="XP_006712019.1">
    <molecule id="Q9C0G6-1"/>
    <property type="nucleotide sequence ID" value="XM_006711956.3"/>
</dbReference>
<dbReference type="RefSeq" id="XP_011530951.1">
    <molecule id="Q9C0G6-1"/>
    <property type="nucleotide sequence ID" value="XM_011532649.3"/>
</dbReference>
<dbReference type="RefSeq" id="XP_011530952.1">
    <molecule id="Q9C0G6-1"/>
    <property type="nucleotide sequence ID" value="XM_011532650.4"/>
</dbReference>
<dbReference type="PDB" id="8J07">
    <property type="method" value="EM"/>
    <property type="resolution" value="4.10 A"/>
    <property type="chains" value="g5=1-4158"/>
</dbReference>
<dbReference type="PDBsum" id="8J07"/>
<dbReference type="EMDB" id="EMD-35888"/>
<dbReference type="SMR" id="Q9C0G6"/>
<dbReference type="BioGRID" id="108107">
    <property type="interactions" value="34"/>
</dbReference>
<dbReference type="FunCoup" id="Q9C0G6">
    <property type="interactions" value="9"/>
</dbReference>
<dbReference type="IntAct" id="Q9C0G6">
    <property type="interactions" value="7"/>
</dbReference>
<dbReference type="STRING" id="9606.ENSP00000374045"/>
<dbReference type="GlyGen" id="Q9C0G6">
    <property type="glycosylation" value="3 sites"/>
</dbReference>
<dbReference type="iPTMnet" id="Q9C0G6"/>
<dbReference type="PhosphoSitePlus" id="Q9C0G6"/>
<dbReference type="BioMuta" id="DNAH6"/>
<dbReference type="DMDM" id="166922150"/>
<dbReference type="jPOST" id="Q9C0G6"/>
<dbReference type="MassIVE" id="Q9C0G6"/>
<dbReference type="PaxDb" id="9606-ENSP00000374045"/>
<dbReference type="PeptideAtlas" id="Q9C0G6"/>
<dbReference type="ProteomicsDB" id="80034">
    <molecule id="Q9C0G6-1"/>
</dbReference>
<dbReference type="ProteomicsDB" id="80035">
    <molecule id="Q9C0G6-2"/>
</dbReference>
<dbReference type="ProteomicsDB" id="80036">
    <molecule id="Q9C0G6-3"/>
</dbReference>
<dbReference type="ProteomicsDB" id="80037">
    <molecule id="Q9C0G6-4"/>
</dbReference>
<dbReference type="Antibodypedia" id="31722">
    <property type="antibodies" value="57 antibodies from 16 providers"/>
</dbReference>
<dbReference type="DNASU" id="1768"/>
<dbReference type="Ensembl" id="ENST00000389394.8">
    <molecule id="Q9C0G6-1"/>
    <property type="protein sequence ID" value="ENSP00000374045.3"/>
    <property type="gene ID" value="ENSG00000115423.19"/>
</dbReference>
<dbReference type="GeneID" id="1768"/>
<dbReference type="KEGG" id="hsa:1768"/>
<dbReference type="MANE-Select" id="ENST00000389394.8">
    <property type="protein sequence ID" value="ENSP00000374045.3"/>
    <property type="RefSeq nucleotide sequence ID" value="NM_001370.2"/>
    <property type="RefSeq protein sequence ID" value="NP_001361.1"/>
</dbReference>
<dbReference type="UCSC" id="uc002sor.4">
    <molecule id="Q9C0G6-1"/>
    <property type="organism name" value="human"/>
</dbReference>
<dbReference type="AGR" id="HGNC:2951"/>
<dbReference type="CTD" id="1768"/>
<dbReference type="DisGeNET" id="1768"/>
<dbReference type="GeneCards" id="DNAH6"/>
<dbReference type="HGNC" id="HGNC:2951">
    <property type="gene designation" value="DNAH6"/>
</dbReference>
<dbReference type="HPA" id="ENSG00000115423">
    <property type="expression patterns" value="Tissue enhanced (choroid plexus, fallopian tube)"/>
</dbReference>
<dbReference type="MalaCards" id="DNAH6"/>
<dbReference type="MIM" id="603336">
    <property type="type" value="gene"/>
</dbReference>
<dbReference type="neXtProt" id="NX_Q9C0G6"/>
<dbReference type="OpenTargets" id="ENSG00000115423"/>
<dbReference type="PharmGKB" id="PA27404"/>
<dbReference type="VEuPathDB" id="HostDB:ENSG00000115423"/>
<dbReference type="eggNOG" id="KOG3595">
    <property type="taxonomic scope" value="Eukaryota"/>
</dbReference>
<dbReference type="GeneTree" id="ENSGT00940000154761"/>
<dbReference type="HOGENOM" id="CLU_000038_0_0_1"/>
<dbReference type="InParanoid" id="Q9C0G6"/>
<dbReference type="OMA" id="VESFDWQ"/>
<dbReference type="OrthoDB" id="5593012at2759"/>
<dbReference type="PAN-GO" id="Q9C0G6">
    <property type="GO annotations" value="5 GO annotations based on evolutionary models"/>
</dbReference>
<dbReference type="PhylomeDB" id="Q9C0G6"/>
<dbReference type="TreeFam" id="TF352520"/>
<dbReference type="PathwayCommons" id="Q9C0G6"/>
<dbReference type="SignaLink" id="Q9C0G6"/>
<dbReference type="BioGRID-ORCS" id="1768">
    <property type="hits" value="15 hits in 1153 CRISPR screens"/>
</dbReference>
<dbReference type="ChiTaRS" id="DNAH6">
    <property type="organism name" value="human"/>
</dbReference>
<dbReference type="GenomeRNAi" id="1768"/>
<dbReference type="Pharos" id="Q9C0G6">
    <property type="development level" value="Tdark"/>
</dbReference>
<dbReference type="PRO" id="PR:Q9C0G6"/>
<dbReference type="Proteomes" id="UP000005640">
    <property type="component" value="Chromosome 2"/>
</dbReference>
<dbReference type="RNAct" id="Q9C0G6">
    <property type="molecule type" value="protein"/>
</dbReference>
<dbReference type="Bgee" id="ENSG00000115423">
    <property type="expression patterns" value="Expressed in epithelium of bronchus and 130 other cell types or tissues"/>
</dbReference>
<dbReference type="GO" id="GO:0097729">
    <property type="term" value="C:9+2 motile cilium"/>
    <property type="evidence" value="ECO:0000318"/>
    <property type="project" value="GO_Central"/>
</dbReference>
<dbReference type="GO" id="GO:0005930">
    <property type="term" value="C:axoneme"/>
    <property type="evidence" value="ECO:0007669"/>
    <property type="project" value="UniProtKB-ARBA"/>
</dbReference>
<dbReference type="GO" id="GO:0030286">
    <property type="term" value="C:dynein complex"/>
    <property type="evidence" value="ECO:0000318"/>
    <property type="project" value="GO_Central"/>
</dbReference>
<dbReference type="GO" id="GO:0005874">
    <property type="term" value="C:microtubule"/>
    <property type="evidence" value="ECO:0007669"/>
    <property type="project" value="UniProtKB-KW"/>
</dbReference>
<dbReference type="GO" id="GO:0005524">
    <property type="term" value="F:ATP binding"/>
    <property type="evidence" value="ECO:0007669"/>
    <property type="project" value="UniProtKB-KW"/>
</dbReference>
<dbReference type="GO" id="GO:0016887">
    <property type="term" value="F:ATP hydrolysis activity"/>
    <property type="evidence" value="ECO:0007669"/>
    <property type="project" value="InterPro"/>
</dbReference>
<dbReference type="GO" id="GO:0045505">
    <property type="term" value="F:dynein intermediate chain binding"/>
    <property type="evidence" value="ECO:0000318"/>
    <property type="project" value="GO_Central"/>
</dbReference>
<dbReference type="GO" id="GO:0051959">
    <property type="term" value="F:dynein light intermediate chain binding"/>
    <property type="evidence" value="ECO:0000318"/>
    <property type="project" value="GO_Central"/>
</dbReference>
<dbReference type="GO" id="GO:0008569">
    <property type="term" value="F:minus-end-directed microtubule motor activity"/>
    <property type="evidence" value="ECO:0000318"/>
    <property type="project" value="GO_Central"/>
</dbReference>
<dbReference type="GO" id="GO:0060294">
    <property type="term" value="P:cilium movement involved in cell motility"/>
    <property type="evidence" value="ECO:0000318"/>
    <property type="project" value="GO_Central"/>
</dbReference>
<dbReference type="CDD" id="cd00009">
    <property type="entry name" value="AAA"/>
    <property type="match status" value="1"/>
</dbReference>
<dbReference type="FunFam" id="1.10.287.2620:FF:000001">
    <property type="entry name" value="Cytoplasmic dynein heavy chain 1"/>
    <property type="match status" value="1"/>
</dbReference>
<dbReference type="FunFam" id="1.20.920.30:FF:000002">
    <property type="entry name" value="Dynein axonemal heavy chain 3"/>
    <property type="match status" value="1"/>
</dbReference>
<dbReference type="FunFam" id="1.10.8.1220:FF:000001">
    <property type="entry name" value="Dynein axonemal heavy chain 5"/>
    <property type="match status" value="1"/>
</dbReference>
<dbReference type="FunFam" id="1.10.8.710:FF:000004">
    <property type="entry name" value="Dynein axonemal heavy chain 6"/>
    <property type="match status" value="1"/>
</dbReference>
<dbReference type="FunFam" id="1.10.8.720:FF:000007">
    <property type="entry name" value="Dynein axonemal heavy chain 6"/>
    <property type="match status" value="1"/>
</dbReference>
<dbReference type="FunFam" id="1.20.140.100:FF:000004">
    <property type="entry name" value="Dynein axonemal heavy chain 6"/>
    <property type="match status" value="1"/>
</dbReference>
<dbReference type="FunFam" id="3.10.490.20:FF:000005">
    <property type="entry name" value="Dynein axonemal heavy chain 6"/>
    <property type="match status" value="1"/>
</dbReference>
<dbReference type="FunFam" id="3.20.180.20:FF:000004">
    <property type="entry name" value="Dynein axonemal heavy chain 6"/>
    <property type="match status" value="1"/>
</dbReference>
<dbReference type="FunFam" id="3.40.50.300:FF:001143">
    <property type="entry name" value="Dynein axonemal heavy chain 6"/>
    <property type="match status" value="1"/>
</dbReference>
<dbReference type="FunFam" id="3.40.50.300:FF:002141">
    <property type="entry name" value="Dynein heavy chain"/>
    <property type="match status" value="1"/>
</dbReference>
<dbReference type="FunFam" id="3.40.50.300:FF:000223">
    <property type="entry name" value="Dynein heavy chain 3, axonemal"/>
    <property type="match status" value="1"/>
</dbReference>
<dbReference type="FunFam" id="3.40.50.300:FF:000063">
    <property type="entry name" value="dynein heavy chain 6, axonemal"/>
    <property type="match status" value="1"/>
</dbReference>
<dbReference type="FunFam" id="1.10.472.130:FF:000015">
    <property type="entry name" value="Dynein heavy chain 7"/>
    <property type="match status" value="1"/>
</dbReference>
<dbReference type="FunFam" id="1.20.1270.280:FF:000009">
    <property type="entry name" value="Dynein, axonemal, heavy chain 6"/>
    <property type="match status" value="1"/>
</dbReference>
<dbReference type="FunFam" id="1.20.58.1120:FF:000011">
    <property type="entry name" value="Dynein, axonemal, heavy chain 6"/>
    <property type="match status" value="1"/>
</dbReference>
<dbReference type="FunFam" id="1.20.920.20:FF:000006">
    <property type="entry name" value="Dynein, axonemal, heavy chain 6"/>
    <property type="match status" value="1"/>
</dbReference>
<dbReference type="FunFam" id="3.40.50.300:FF:000362">
    <property type="entry name" value="Dynein, axonemal, heavy chain 6"/>
    <property type="match status" value="1"/>
</dbReference>
<dbReference type="Gene3D" id="1.10.287.2620">
    <property type="match status" value="1"/>
</dbReference>
<dbReference type="Gene3D" id="1.10.8.1220">
    <property type="match status" value="1"/>
</dbReference>
<dbReference type="Gene3D" id="1.10.8.710">
    <property type="match status" value="1"/>
</dbReference>
<dbReference type="Gene3D" id="1.20.1270.280">
    <property type="match status" value="1"/>
</dbReference>
<dbReference type="Gene3D" id="1.20.58.1120">
    <property type="match status" value="1"/>
</dbReference>
<dbReference type="Gene3D" id="1.20.920.20">
    <property type="match status" value="1"/>
</dbReference>
<dbReference type="Gene3D" id="1.20.920.30">
    <property type="match status" value="1"/>
</dbReference>
<dbReference type="Gene3D" id="3.10.490.20">
    <property type="match status" value="1"/>
</dbReference>
<dbReference type="Gene3D" id="6.10.140.1060">
    <property type="match status" value="1"/>
</dbReference>
<dbReference type="Gene3D" id="1.20.140.100">
    <property type="entry name" value="Dynein heavy chain, N-terminal domain 2"/>
    <property type="match status" value="1"/>
</dbReference>
<dbReference type="Gene3D" id="3.20.180.20">
    <property type="entry name" value="Dynein heavy chain, N-terminal domain 2"/>
    <property type="match status" value="1"/>
</dbReference>
<dbReference type="Gene3D" id="3.40.50.300">
    <property type="entry name" value="P-loop containing nucleotide triphosphate hydrolases"/>
    <property type="match status" value="5"/>
</dbReference>
<dbReference type="Gene3D" id="1.10.8.720">
    <property type="entry name" value="Region D6 of dynein motor"/>
    <property type="match status" value="1"/>
</dbReference>
<dbReference type="InterPro" id="IPR003593">
    <property type="entry name" value="AAA+_ATPase"/>
</dbReference>
<dbReference type="InterPro" id="IPR035699">
    <property type="entry name" value="AAA_6"/>
</dbReference>
<dbReference type="InterPro" id="IPR035706">
    <property type="entry name" value="AAA_9"/>
</dbReference>
<dbReference type="InterPro" id="IPR041658">
    <property type="entry name" value="AAA_lid_11"/>
</dbReference>
<dbReference type="InterPro" id="IPR042219">
    <property type="entry name" value="AAA_lid_11_sf"/>
</dbReference>
<dbReference type="InterPro" id="IPR026983">
    <property type="entry name" value="DHC"/>
</dbReference>
<dbReference type="InterPro" id="IPR041589">
    <property type="entry name" value="DNAH3_AAA_lid_1"/>
</dbReference>
<dbReference type="InterPro" id="IPR042222">
    <property type="entry name" value="Dynein_2_N"/>
</dbReference>
<dbReference type="InterPro" id="IPR043157">
    <property type="entry name" value="Dynein_AAA1S"/>
</dbReference>
<dbReference type="InterPro" id="IPR041466">
    <property type="entry name" value="Dynein_AAA5_ext"/>
</dbReference>
<dbReference type="InterPro" id="IPR041228">
    <property type="entry name" value="Dynein_C"/>
</dbReference>
<dbReference type="InterPro" id="IPR043160">
    <property type="entry name" value="Dynein_C_barrel"/>
</dbReference>
<dbReference type="InterPro" id="IPR024743">
    <property type="entry name" value="Dynein_HC_stalk"/>
</dbReference>
<dbReference type="InterPro" id="IPR024317">
    <property type="entry name" value="Dynein_heavy_chain_D4_dom"/>
</dbReference>
<dbReference type="InterPro" id="IPR004273">
    <property type="entry name" value="Dynein_heavy_D6_P-loop"/>
</dbReference>
<dbReference type="InterPro" id="IPR013602">
    <property type="entry name" value="Dynein_heavy_linker"/>
</dbReference>
<dbReference type="InterPro" id="IPR042228">
    <property type="entry name" value="Dynein_linker_3"/>
</dbReference>
<dbReference type="InterPro" id="IPR027417">
    <property type="entry name" value="P-loop_NTPase"/>
</dbReference>
<dbReference type="PANTHER" id="PTHR22878:SF67">
    <property type="entry name" value="DYNEIN AXONEMAL HEAVY CHAIN 6"/>
    <property type="match status" value="1"/>
</dbReference>
<dbReference type="PANTHER" id="PTHR22878">
    <property type="entry name" value="DYNEIN HEAVY CHAIN 6, AXONEMAL-LIKE-RELATED"/>
    <property type="match status" value="1"/>
</dbReference>
<dbReference type="Pfam" id="PF12774">
    <property type="entry name" value="AAA_6"/>
    <property type="match status" value="1"/>
</dbReference>
<dbReference type="Pfam" id="PF12775">
    <property type="entry name" value="AAA_7"/>
    <property type="match status" value="1"/>
</dbReference>
<dbReference type="Pfam" id="PF12780">
    <property type="entry name" value="AAA_8"/>
    <property type="match status" value="1"/>
</dbReference>
<dbReference type="Pfam" id="PF12781">
    <property type="entry name" value="AAA_9"/>
    <property type="match status" value="1"/>
</dbReference>
<dbReference type="Pfam" id="PF17857">
    <property type="entry name" value="AAA_lid_1"/>
    <property type="match status" value="1"/>
</dbReference>
<dbReference type="Pfam" id="PF18198">
    <property type="entry name" value="AAA_lid_11"/>
    <property type="match status" value="1"/>
</dbReference>
<dbReference type="Pfam" id="PF08393">
    <property type="entry name" value="DHC_N2"/>
    <property type="match status" value="1"/>
</dbReference>
<dbReference type="Pfam" id="PF17852">
    <property type="entry name" value="Dynein_AAA_lid"/>
    <property type="match status" value="1"/>
</dbReference>
<dbReference type="Pfam" id="PF18199">
    <property type="entry name" value="Dynein_C"/>
    <property type="match status" value="1"/>
</dbReference>
<dbReference type="Pfam" id="PF03028">
    <property type="entry name" value="Dynein_heavy"/>
    <property type="match status" value="1"/>
</dbReference>
<dbReference type="Pfam" id="PF12777">
    <property type="entry name" value="MT"/>
    <property type="match status" value="1"/>
</dbReference>
<dbReference type="SMART" id="SM00382">
    <property type="entry name" value="AAA"/>
    <property type="match status" value="4"/>
</dbReference>
<dbReference type="SUPFAM" id="SSF52540">
    <property type="entry name" value="P-loop containing nucleoside triphosphate hydrolases"/>
    <property type="match status" value="4"/>
</dbReference>
<accession>Q9C0G6</accession>
<accession>A0PJN9</accession>
<accession>B5MEE0</accession>
<accession>B7ZL99</accession>
<accession>O95493</accession>
<accession>Q53QZ1</accession>
<accession>Q53TE5</accession>
<accession>Q8N1W6</accession>
<accession>Q92861</accession>
<accession>Q96BL6</accession>
<accession>Q9H030</accession>
<accession>Q9H5E1</accession>